<name>HTPG_RHOP2</name>
<keyword id="KW-0067">ATP-binding</keyword>
<keyword id="KW-0143">Chaperone</keyword>
<keyword id="KW-0963">Cytoplasm</keyword>
<keyword id="KW-0547">Nucleotide-binding</keyword>
<keyword id="KW-1185">Reference proteome</keyword>
<keyword id="KW-0346">Stress response</keyword>
<feature type="chain" id="PRO_0000258524" description="Chaperone protein HtpG">
    <location>
        <begin position="1"/>
        <end position="628"/>
    </location>
</feature>
<feature type="region of interest" description="A; substrate-binding" evidence="1">
    <location>
        <begin position="1"/>
        <end position="334"/>
    </location>
</feature>
<feature type="region of interest" description="B" evidence="1">
    <location>
        <begin position="335"/>
        <end position="550"/>
    </location>
</feature>
<feature type="region of interest" description="C" evidence="1">
    <location>
        <begin position="551"/>
        <end position="628"/>
    </location>
</feature>
<accession>Q2IQY5</accession>
<reference key="1">
    <citation type="submission" date="2006-01" db="EMBL/GenBank/DDBJ databases">
        <title>Complete sequence of Rhodopseudomonas palustris HaA2.</title>
        <authorList>
            <consortium name="US DOE Joint Genome Institute"/>
            <person name="Copeland A."/>
            <person name="Lucas S."/>
            <person name="Lapidus A."/>
            <person name="Barry K."/>
            <person name="Detter J.C."/>
            <person name="Glavina T."/>
            <person name="Hammon N."/>
            <person name="Israni S."/>
            <person name="Pitluck S."/>
            <person name="Chain P."/>
            <person name="Malfatti S."/>
            <person name="Shin M."/>
            <person name="Vergez L."/>
            <person name="Schmutz J."/>
            <person name="Larimer F."/>
            <person name="Land M."/>
            <person name="Hauser L."/>
            <person name="Pelletier D.A."/>
            <person name="Kyrpides N."/>
            <person name="Anderson I."/>
            <person name="Oda Y."/>
            <person name="Harwood C.S."/>
            <person name="Richardson P."/>
        </authorList>
    </citation>
    <scope>NUCLEOTIDE SEQUENCE [LARGE SCALE GENOMIC DNA]</scope>
    <source>
        <strain>HaA2</strain>
    </source>
</reference>
<evidence type="ECO:0000255" key="1">
    <source>
        <dbReference type="HAMAP-Rule" id="MF_00505"/>
    </source>
</evidence>
<dbReference type="EMBL" id="CP000250">
    <property type="protein sequence ID" value="ABD09375.1"/>
    <property type="molecule type" value="Genomic_DNA"/>
</dbReference>
<dbReference type="RefSeq" id="WP_011443557.1">
    <property type="nucleotide sequence ID" value="NC_007778.1"/>
</dbReference>
<dbReference type="SMR" id="Q2IQY5"/>
<dbReference type="STRING" id="316058.RPB_4692"/>
<dbReference type="KEGG" id="rpb:RPB_4692"/>
<dbReference type="eggNOG" id="COG0326">
    <property type="taxonomic scope" value="Bacteria"/>
</dbReference>
<dbReference type="HOGENOM" id="CLU_006684_3_0_5"/>
<dbReference type="OrthoDB" id="9802640at2"/>
<dbReference type="Proteomes" id="UP000008809">
    <property type="component" value="Chromosome"/>
</dbReference>
<dbReference type="GO" id="GO:0005737">
    <property type="term" value="C:cytoplasm"/>
    <property type="evidence" value="ECO:0007669"/>
    <property type="project" value="UniProtKB-SubCell"/>
</dbReference>
<dbReference type="GO" id="GO:0005524">
    <property type="term" value="F:ATP binding"/>
    <property type="evidence" value="ECO:0007669"/>
    <property type="project" value="UniProtKB-UniRule"/>
</dbReference>
<dbReference type="GO" id="GO:0016887">
    <property type="term" value="F:ATP hydrolysis activity"/>
    <property type="evidence" value="ECO:0007669"/>
    <property type="project" value="InterPro"/>
</dbReference>
<dbReference type="GO" id="GO:0140662">
    <property type="term" value="F:ATP-dependent protein folding chaperone"/>
    <property type="evidence" value="ECO:0007669"/>
    <property type="project" value="InterPro"/>
</dbReference>
<dbReference type="GO" id="GO:0051082">
    <property type="term" value="F:unfolded protein binding"/>
    <property type="evidence" value="ECO:0007669"/>
    <property type="project" value="UniProtKB-UniRule"/>
</dbReference>
<dbReference type="CDD" id="cd16927">
    <property type="entry name" value="HATPase_Hsp90-like"/>
    <property type="match status" value="1"/>
</dbReference>
<dbReference type="FunFam" id="3.30.565.10:FF:000009">
    <property type="entry name" value="Molecular chaperone HtpG"/>
    <property type="match status" value="1"/>
</dbReference>
<dbReference type="Gene3D" id="3.30.230.80">
    <property type="match status" value="1"/>
</dbReference>
<dbReference type="Gene3D" id="3.40.50.11260">
    <property type="match status" value="1"/>
</dbReference>
<dbReference type="Gene3D" id="1.20.120.790">
    <property type="entry name" value="Heat shock protein 90, C-terminal domain"/>
    <property type="match status" value="1"/>
</dbReference>
<dbReference type="Gene3D" id="3.30.565.10">
    <property type="entry name" value="Histidine kinase-like ATPase, C-terminal domain"/>
    <property type="match status" value="1"/>
</dbReference>
<dbReference type="HAMAP" id="MF_00505">
    <property type="entry name" value="HSP90"/>
    <property type="match status" value="1"/>
</dbReference>
<dbReference type="InterPro" id="IPR036890">
    <property type="entry name" value="HATPase_C_sf"/>
</dbReference>
<dbReference type="InterPro" id="IPR037196">
    <property type="entry name" value="HSP90_C"/>
</dbReference>
<dbReference type="InterPro" id="IPR001404">
    <property type="entry name" value="Hsp90_fam"/>
</dbReference>
<dbReference type="InterPro" id="IPR020575">
    <property type="entry name" value="Hsp90_N"/>
</dbReference>
<dbReference type="InterPro" id="IPR020568">
    <property type="entry name" value="Ribosomal_Su5_D2-typ_SF"/>
</dbReference>
<dbReference type="NCBIfam" id="NF003555">
    <property type="entry name" value="PRK05218.1"/>
    <property type="match status" value="1"/>
</dbReference>
<dbReference type="PANTHER" id="PTHR11528">
    <property type="entry name" value="HEAT SHOCK PROTEIN 90 FAMILY MEMBER"/>
    <property type="match status" value="1"/>
</dbReference>
<dbReference type="Pfam" id="PF13589">
    <property type="entry name" value="HATPase_c_3"/>
    <property type="match status" value="1"/>
</dbReference>
<dbReference type="Pfam" id="PF00183">
    <property type="entry name" value="HSP90"/>
    <property type="match status" value="1"/>
</dbReference>
<dbReference type="PIRSF" id="PIRSF002583">
    <property type="entry name" value="Hsp90"/>
    <property type="match status" value="1"/>
</dbReference>
<dbReference type="PRINTS" id="PR00775">
    <property type="entry name" value="HEATSHOCK90"/>
</dbReference>
<dbReference type="SMART" id="SM00387">
    <property type="entry name" value="HATPase_c"/>
    <property type="match status" value="1"/>
</dbReference>
<dbReference type="SUPFAM" id="SSF55874">
    <property type="entry name" value="ATPase domain of HSP90 chaperone/DNA topoisomerase II/histidine kinase"/>
    <property type="match status" value="1"/>
</dbReference>
<dbReference type="SUPFAM" id="SSF110942">
    <property type="entry name" value="HSP90 C-terminal domain"/>
    <property type="match status" value="1"/>
</dbReference>
<dbReference type="SUPFAM" id="SSF54211">
    <property type="entry name" value="Ribosomal protein S5 domain 2-like"/>
    <property type="match status" value="1"/>
</dbReference>
<organism>
    <name type="scientific">Rhodopseudomonas palustris (strain HaA2)</name>
    <dbReference type="NCBI Taxonomy" id="316058"/>
    <lineage>
        <taxon>Bacteria</taxon>
        <taxon>Pseudomonadati</taxon>
        <taxon>Pseudomonadota</taxon>
        <taxon>Alphaproteobacteria</taxon>
        <taxon>Hyphomicrobiales</taxon>
        <taxon>Nitrobacteraceae</taxon>
        <taxon>Rhodopseudomonas</taxon>
    </lineage>
</organism>
<sequence length="628" mass="68606">MTTIDTASETKPFQAEVAELLNLMVHSVYSETDIFLRELISNASDALDKLRYESIANPALMADGGEPKIRIVPKKAPDTLTVIDNGIGMDRQELIDNLGTIAKSGTKSFLTKLTEAKDGAGLIGQFGVGFYAAFMVADSITVTSRRAGSAEAWTWSSSGGAGFEIAPASEEAAARIERGTEIVLHLKPDAAKYLEAYQIERIVSEYSDNIQFPIELVPEDGEPRQINSASALWQRSKSELTEEDYKQAYKQVAGAFDEPAMTLHYRAEGRQSYAVLLFAPSTKPFDLFEPERKGRVKLYVRRVFITADADLLPPYLRFLRGVIDSEDLPLNLSREMLQNNPQLAQIRKAVTGKVIGELDSLADKQPEQFAKIWDAFGPVIKEGLYEDYERREKLLSLARFTTTAGEKRSLAQYVEAMKENQTEIYYLVGDSLDRLKANPKLESAAARGIEVLLLTDAVDAFWTSGGLDFGGKPLKSLSQGEVNFDLIPKLDADKAEDKPDEAKADEATVIAVIKDALGDRVSDVKASQRLTASASCLVAGGFGPDRELEKMLARANKGAATKPVLEINLGHPLVAALADTKADKADATDLSFLLLEQAQILDGELPEDPAAFAGRLNRLVLRGVVAHG</sequence>
<comment type="function">
    <text evidence="1">Molecular chaperone. Has ATPase activity.</text>
</comment>
<comment type="subunit">
    <text evidence="1">Homodimer.</text>
</comment>
<comment type="subcellular location">
    <subcellularLocation>
        <location evidence="1">Cytoplasm</location>
    </subcellularLocation>
</comment>
<comment type="similarity">
    <text evidence="1">Belongs to the heat shock protein 90 family.</text>
</comment>
<protein>
    <recommendedName>
        <fullName evidence="1">Chaperone protein HtpG</fullName>
    </recommendedName>
    <alternativeName>
        <fullName evidence="1">Heat shock protein HtpG</fullName>
    </alternativeName>
    <alternativeName>
        <fullName evidence="1">High temperature protein G</fullName>
    </alternativeName>
</protein>
<proteinExistence type="inferred from homology"/>
<gene>
    <name evidence="1" type="primary">htpG</name>
    <name type="ordered locus">RPB_4692</name>
</gene>